<sequence length="1883" mass="202795">MAQQQQQQHLQQQQQQHHQQQQLQQLQQQQQLPQYNNNLYNLNYNMEDPERRKRREREKYERQQGIQSDDRETSLFEAPRRLNPSEGDNMITAALGEFVDAKEHMCMNMVGIHRQAPGGGSNARLQGQATTPIINSLSSINSTTTTSSSASLLPGQLPTSQQQQQQQQQQQQHYQQQQRAPTYLKQADNKPPYNGRGGYPGQPMKNDIPSSSGMAPPRGPPRSASSSSSASNNNSSSATNNATAAAATSASTAPLLGPPMSTQMPNGREKSYLGPPAPALSNGGRFVPPAASGKRTSNTAGLQPPPPEKDISKIINEMTNSYRVTPLTSIAATPHAPTRENYNLNGPNKNKYAFDDVEPIGPLNSPPAASGASSSSLSCTTNSSSSLLMTPLLAPIAPITSPIAPLLTTPPQASQLPLPLPLLPPLAGATTVLPPALGMAAVAPIQQLMPTPPKASPTPPTAIRPLKSEKNHSLEKQDSCLENDLELSESDDDRKRDICSAGNSSNSSETDSSESGSEASSKGEAQQQQQQQQQLLHHQHQQQLLLQQQQQQQQQQRATATTANGGNKKKCQTIIASGANTISGLLTSSGLGGSGGAVNATSNTNSGLLGGGGGSGSTGGGGGSSSSGMGNMSSSSSSNKTPSPTDSNRWHLSRFFPKPTNQATAESVSPGNVACGNVSMKVPGILPGGAQIIPESIDVTTAIVKNEKLHDDTRRITDDEDEDEQQQQRYAAGLSVTVKKEQQEQQQQQQQQQQQQQQQQQQQQQQQQLSAEQLALAGALPNNQIKREVRLSDSASISSGSASGSSSSDSAAGEVVPLPGPGETLQIPGVPAAITTVLRVPPAMQQKVPPNSVTLTPIGPLPASPKPRQKKPRKKKMSAATAPPLDSSDEDEPASSNKKHALELAATTAAAAAAIAAAPAATAAALPAVKKGRGRPRKQQQQLQQTQSGNLSSASAGSLAKGPTLTAAKKPLAKSTAAAAAAAALAATALTVAGSRKREHSSNSSSNGNTPTKKLHAAPATVAAAAAAAAAATTLLPPTAAAGSSSDEDSTSSSCSSTKSSNSSSSGSDSEATATTAAAATTAAAAAAATTTTTQNPAKKRIVKINKLGVVSSSKNNRLYGAGSSSNSSSSETEEQQQQQQQHKQQQQLLLMQQQQQQQQQQQQKQQLQQHQQQQPLQPQQQQQQQSHFTPDAKQARQRSSSSDGSSSSSTDSSSTNSSSSSDEVDVHHGGGKRKSDKKKICTLTRIFNPKEGGAKKQGQVVIIDQSEEQLQQQQQQLQQQQQQQQQHQQQQQQQQQQEQQQSKEWKPRATPTQLLGATLASPARTTTPHLTSLMCKIDLSKLARVPPEWYQKSYRQYAAEQQQQQQQHLHTQQLHHPPHHQHQHYQQQHQPHQQKAQQNGHLSSRSAEGARTPKELQQAYGMPNGYVTSGGAAGAAGAASKLLGGVKHEHGVKPEPELDAGYEAKYKPNSVKQEFMPKQEMPTRRRKRSSSSSPYKEKKRKKEKADQVSKELLPVPVLLPANNHERLSRDKLELLQQEISSANGSPTKRSFPLAHAQQQQHQQQQQQQQHQPQHQQQLKATTTTSTTATVAAVQTSTTATQQPTTCSEAVQTTPPPVAPPPPPRLIYRSHFDNEEEPPSDDLRKNEILLQEAIRRKRAADSERDSFKQMTLYLEAIVYFLLTADAMERSNMEATWTMYKDTLTLIKFISSKNRPYQQSTNGKHESHNIVAILSLRCQSLISLKLYKLRRANCRAIIASCSEFFRTGGRGDILNGNTLSSISPSNSVGSQGSGSNTPPGRIVPQDIHNQLCRQNEYLTYVNSAHDLWDQADRLVRTGNHIDFIRKLDHENGPMTLHSTMHEVFRYVQAGLKTLRDSVSYPQSQ</sequence>
<evidence type="ECO:0000250" key="1">
    <source>
        <dbReference type="UniProtKB" id="Q9VQI9"/>
    </source>
</evidence>
<evidence type="ECO:0000255" key="2"/>
<evidence type="ECO:0000256" key="3">
    <source>
        <dbReference type="SAM" id="MobiDB-lite"/>
    </source>
</evidence>
<evidence type="ECO:0000312" key="4">
    <source>
        <dbReference type="EMBL" id="EDV99022.1"/>
    </source>
</evidence>
<organism>
    <name type="scientific">Drosophila grimshawi</name>
    <name type="common">Hawaiian fruit fly</name>
    <name type="synonym">Idiomyia grimshawi</name>
    <dbReference type="NCBI Taxonomy" id="7222"/>
    <lineage>
        <taxon>Eukaryota</taxon>
        <taxon>Metazoa</taxon>
        <taxon>Ecdysozoa</taxon>
        <taxon>Arthropoda</taxon>
        <taxon>Hexapoda</taxon>
        <taxon>Insecta</taxon>
        <taxon>Pterygota</taxon>
        <taxon>Neoptera</taxon>
        <taxon>Endopterygota</taxon>
        <taxon>Diptera</taxon>
        <taxon>Brachycera</taxon>
        <taxon>Muscomorpha</taxon>
        <taxon>Ephydroidea</taxon>
        <taxon>Drosophilidae</taxon>
        <taxon>Drosophila</taxon>
        <taxon>Hawaiian Drosophila</taxon>
    </lineage>
</organism>
<comment type="function">
    <text evidence="1">Has a role in transcriptional regulation. Acts in parallel with the Ras/MAPK and the PI3K/PKB pathways in the control of cell identity and cellular growth. Essential for regulation of the cytoskeleton and cell growth but not for cell proliferation or growth rate. Required specifically for the microtubule-based basal transport of lipid droplets. Plays a partially redundant function downstream of Raf in cell fate specification in the developing eye. Pair-rule protein that regulates embryonic cellularization, gastrulation and segmentation (By similarity).</text>
</comment>
<comment type="subcellular location">
    <subcellularLocation>
        <location evidence="1">Nucleus</location>
    </subcellularLocation>
</comment>
<comment type="similarity">
    <text evidence="2">Belongs to the AF4 family.</text>
</comment>
<accession>B4JQ42</accession>
<reference evidence="4" key="1">
    <citation type="journal article" date="2007" name="Nature">
        <title>Evolution of genes and genomes on the Drosophila phylogeny.</title>
        <authorList>
            <consortium name="Drosophila 12 genomes consortium"/>
        </authorList>
    </citation>
    <scope>NUCLEOTIDE SEQUENCE [LARGE SCALE GENOMIC DNA]</scope>
    <source>
        <strain evidence="4">Tucson 15287-2541.00</strain>
    </source>
</reference>
<gene>
    <name evidence="1" type="primary">lilli</name>
    <name type="ORF">GH13637</name>
</gene>
<proteinExistence type="inferred from homology"/>
<feature type="chain" id="PRO_0000394674" description="AF4/FMR2 family member lilli">
    <location>
        <begin position="1"/>
        <end position="1883"/>
    </location>
</feature>
<feature type="DNA-binding region" description="A.T hook" evidence="2">
    <location>
        <begin position="930"/>
        <end position="942"/>
    </location>
</feature>
<feature type="region of interest" description="Disordered" evidence="3">
    <location>
        <begin position="1"/>
        <end position="88"/>
    </location>
</feature>
<feature type="region of interest" description="Disordered" evidence="3">
    <location>
        <begin position="140"/>
        <end position="311"/>
    </location>
</feature>
<feature type="region of interest" description="Disordered" evidence="3">
    <location>
        <begin position="329"/>
        <end position="381"/>
    </location>
</feature>
<feature type="region of interest" description="Disordered" evidence="3">
    <location>
        <begin position="449"/>
        <end position="540"/>
    </location>
</feature>
<feature type="region of interest" description="Disordered" evidence="3">
    <location>
        <begin position="609"/>
        <end position="654"/>
    </location>
</feature>
<feature type="region of interest" description="Disordered" evidence="3">
    <location>
        <begin position="796"/>
        <end position="827"/>
    </location>
</feature>
<feature type="region of interest" description="Disordered" evidence="3">
    <location>
        <begin position="844"/>
        <end position="901"/>
    </location>
</feature>
<feature type="region of interest" description="Disordered" evidence="3">
    <location>
        <begin position="922"/>
        <end position="962"/>
    </location>
</feature>
<feature type="region of interest" description="Disordered" evidence="3">
    <location>
        <begin position="992"/>
        <end position="1018"/>
    </location>
</feature>
<feature type="region of interest" description="Disordered" evidence="3">
    <location>
        <begin position="1039"/>
        <end position="1075"/>
    </location>
</feature>
<feature type="region of interest" description="Disordered" evidence="3">
    <location>
        <begin position="1115"/>
        <end position="1145"/>
    </location>
</feature>
<feature type="region of interest" description="Disordered" evidence="3">
    <location>
        <begin position="1170"/>
        <end position="1238"/>
    </location>
</feature>
<feature type="region of interest" description="Disordered" evidence="3">
    <location>
        <begin position="1358"/>
        <end position="1413"/>
    </location>
</feature>
<feature type="region of interest" description="Disordered" evidence="3">
    <location>
        <begin position="1450"/>
        <end position="1510"/>
    </location>
</feature>
<feature type="region of interest" description="Disordered" evidence="3">
    <location>
        <begin position="1543"/>
        <end position="1583"/>
    </location>
</feature>
<feature type="region of interest" description="Disordered" evidence="3">
    <location>
        <begin position="1595"/>
        <end position="1641"/>
    </location>
</feature>
<feature type="region of interest" description="Disordered" evidence="3">
    <location>
        <begin position="1783"/>
        <end position="1803"/>
    </location>
</feature>
<feature type="compositionally biased region" description="Low complexity" evidence="3">
    <location>
        <begin position="1"/>
        <end position="45"/>
    </location>
</feature>
<feature type="compositionally biased region" description="Basic and acidic residues" evidence="3">
    <location>
        <begin position="57"/>
        <end position="80"/>
    </location>
</feature>
<feature type="compositionally biased region" description="Low complexity" evidence="3">
    <location>
        <begin position="140"/>
        <end position="154"/>
    </location>
</feature>
<feature type="compositionally biased region" description="Low complexity" evidence="3">
    <location>
        <begin position="161"/>
        <end position="178"/>
    </location>
</feature>
<feature type="compositionally biased region" description="Low complexity" evidence="3">
    <location>
        <begin position="223"/>
        <end position="253"/>
    </location>
</feature>
<feature type="compositionally biased region" description="Low complexity" evidence="3">
    <location>
        <begin position="362"/>
        <end position="381"/>
    </location>
</feature>
<feature type="compositionally biased region" description="Pro residues" evidence="3">
    <location>
        <begin position="450"/>
        <end position="462"/>
    </location>
</feature>
<feature type="compositionally biased region" description="Basic and acidic residues" evidence="3">
    <location>
        <begin position="466"/>
        <end position="479"/>
    </location>
</feature>
<feature type="compositionally biased region" description="Acidic residues" evidence="3">
    <location>
        <begin position="481"/>
        <end position="491"/>
    </location>
</feature>
<feature type="compositionally biased region" description="Low complexity" evidence="3">
    <location>
        <begin position="500"/>
        <end position="540"/>
    </location>
</feature>
<feature type="compositionally biased region" description="Gly residues" evidence="3">
    <location>
        <begin position="609"/>
        <end position="625"/>
    </location>
</feature>
<feature type="compositionally biased region" description="Low complexity" evidence="3">
    <location>
        <begin position="626"/>
        <end position="639"/>
    </location>
</feature>
<feature type="compositionally biased region" description="Low complexity" evidence="3">
    <location>
        <begin position="796"/>
        <end position="813"/>
    </location>
</feature>
<feature type="compositionally biased region" description="Basic residues" evidence="3">
    <location>
        <begin position="867"/>
        <end position="877"/>
    </location>
</feature>
<feature type="compositionally biased region" description="Low complexity" evidence="3">
    <location>
        <begin position="939"/>
        <end position="962"/>
    </location>
</feature>
<feature type="compositionally biased region" description="Low complexity" evidence="3">
    <location>
        <begin position="1124"/>
        <end position="1145"/>
    </location>
</feature>
<feature type="compositionally biased region" description="Low complexity" evidence="3">
    <location>
        <begin position="1170"/>
        <end position="1186"/>
    </location>
</feature>
<feature type="compositionally biased region" description="Low complexity" evidence="3">
    <location>
        <begin position="1200"/>
        <end position="1222"/>
    </location>
</feature>
<feature type="compositionally biased region" description="Low complexity" evidence="3">
    <location>
        <begin position="1362"/>
        <end position="1376"/>
    </location>
</feature>
<feature type="compositionally biased region" description="Low complexity" evidence="3">
    <location>
        <begin position="1385"/>
        <end position="1399"/>
    </location>
</feature>
<feature type="compositionally biased region" description="Basic and acidic residues" evidence="3">
    <location>
        <begin position="1450"/>
        <end position="1467"/>
    </location>
</feature>
<feature type="compositionally biased region" description="Low complexity" evidence="3">
    <location>
        <begin position="1558"/>
        <end position="1583"/>
    </location>
</feature>
<feature type="compositionally biased region" description="Low complexity" evidence="3">
    <location>
        <begin position="1595"/>
        <end position="1606"/>
    </location>
</feature>
<feature type="compositionally biased region" description="Pro residues" evidence="3">
    <location>
        <begin position="1614"/>
        <end position="1625"/>
    </location>
</feature>
<feature type="compositionally biased region" description="Low complexity" evidence="3">
    <location>
        <begin position="1783"/>
        <end position="1794"/>
    </location>
</feature>
<feature type="modified residue" description="Phosphothreonine" evidence="1">
    <location>
        <position position="458"/>
    </location>
</feature>
<feature type="modified residue" description="Phosphoserine" evidence="1">
    <location>
        <position position="488"/>
    </location>
</feature>
<feature type="modified residue" description="Phosphoserine" evidence="1">
    <location>
        <position position="490"/>
    </location>
</feature>
<feature type="modified residue" description="Phosphoserine" evidence="1">
    <location>
        <position position="887"/>
    </location>
</feature>
<feature type="modified residue" description="Phosphoserine" evidence="1">
    <location>
        <position position="888"/>
    </location>
</feature>
<feature type="modified residue" description="Phosphoserine" evidence="1">
    <location>
        <position position="953"/>
    </location>
</feature>
<feature type="modified residue" description="Phosphoserine" evidence="1">
    <location>
        <position position="955"/>
    </location>
</feature>
<feature type="modified residue" description="Phosphoserine" evidence="1">
    <location>
        <position position="1546"/>
    </location>
</feature>
<feature type="modified residue" description="Phosphothreonine" evidence="1">
    <location>
        <position position="1548"/>
    </location>
</feature>
<name>AFFL_DROGR</name>
<dbReference type="EMBL" id="CH916372">
    <property type="protein sequence ID" value="EDV99022.1"/>
    <property type="molecule type" value="Genomic_DNA"/>
</dbReference>
<dbReference type="RefSeq" id="XP_001993097.1">
    <property type="nucleotide sequence ID" value="XM_001993061.1"/>
</dbReference>
<dbReference type="SMR" id="B4JQ42"/>
<dbReference type="FunCoup" id="B4JQ42">
    <property type="interactions" value="250"/>
</dbReference>
<dbReference type="STRING" id="7222.B4JQ42"/>
<dbReference type="eggNOG" id="ENOG502QR32">
    <property type="taxonomic scope" value="Eukaryota"/>
</dbReference>
<dbReference type="HOGENOM" id="CLU_241798_0_0_1"/>
<dbReference type="InParanoid" id="B4JQ42"/>
<dbReference type="OMA" id="NMEATWT"/>
<dbReference type="OrthoDB" id="6382204at2759"/>
<dbReference type="PhylomeDB" id="B4JQ42"/>
<dbReference type="ChiTaRS" id="lilli">
    <property type="organism name" value="fly"/>
</dbReference>
<dbReference type="Proteomes" id="UP000001070">
    <property type="component" value="Unassembled WGS sequence"/>
</dbReference>
<dbReference type="GO" id="GO:0005634">
    <property type="term" value="C:nucleus"/>
    <property type="evidence" value="ECO:0000250"/>
    <property type="project" value="UniProtKB"/>
</dbReference>
<dbReference type="GO" id="GO:0032783">
    <property type="term" value="C:super elongation complex"/>
    <property type="evidence" value="ECO:0007669"/>
    <property type="project" value="TreeGrafter"/>
</dbReference>
<dbReference type="GO" id="GO:0003677">
    <property type="term" value="F:DNA binding"/>
    <property type="evidence" value="ECO:0007669"/>
    <property type="project" value="UniProtKB-KW"/>
</dbReference>
<dbReference type="GO" id="GO:0003712">
    <property type="term" value="F:transcription coregulator activity"/>
    <property type="evidence" value="ECO:0000250"/>
    <property type="project" value="UniProtKB"/>
</dbReference>
<dbReference type="GO" id="GO:0007366">
    <property type="term" value="P:periodic partitioning by pair rule gene"/>
    <property type="evidence" value="ECO:0000250"/>
    <property type="project" value="UniProtKB"/>
</dbReference>
<dbReference type="GO" id="GO:0051493">
    <property type="term" value="P:regulation of cytoskeleton organization"/>
    <property type="evidence" value="ECO:0000250"/>
    <property type="project" value="UniProtKB"/>
</dbReference>
<dbReference type="GO" id="GO:0006355">
    <property type="term" value="P:regulation of DNA-templated transcription"/>
    <property type="evidence" value="ECO:0000250"/>
    <property type="project" value="UniProtKB"/>
</dbReference>
<dbReference type="GO" id="GO:0032368">
    <property type="term" value="P:regulation of lipid transport"/>
    <property type="evidence" value="ECO:0000250"/>
    <property type="project" value="UniProtKB"/>
</dbReference>
<dbReference type="InterPro" id="IPR007797">
    <property type="entry name" value="AF4/FMR2"/>
</dbReference>
<dbReference type="InterPro" id="IPR043640">
    <property type="entry name" value="AF4/FMR2_CHD"/>
</dbReference>
<dbReference type="InterPro" id="IPR000637">
    <property type="entry name" value="HMGI/Y_DNA-bd_CS"/>
</dbReference>
<dbReference type="PANTHER" id="PTHR10528">
    <property type="entry name" value="AF4/FMR2 FAMILY MEMBER"/>
    <property type="match status" value="1"/>
</dbReference>
<dbReference type="PANTHER" id="PTHR10528:SF17">
    <property type="entry name" value="AF4_FMR2 FAMILY MEMBER LILLI"/>
    <property type="match status" value="1"/>
</dbReference>
<dbReference type="Pfam" id="PF18876">
    <property type="entry name" value="AFF4_CHD"/>
    <property type="match status" value="1"/>
</dbReference>
<dbReference type="PROSITE" id="PS00354">
    <property type="entry name" value="HMGI_Y"/>
    <property type="match status" value="1"/>
</dbReference>
<protein>
    <recommendedName>
        <fullName evidence="1">AF4/FMR2 family member lilli</fullName>
    </recommendedName>
    <alternativeName>
        <fullName evidence="1">Protein lilliputian</fullName>
    </alternativeName>
</protein>
<keyword id="KW-0217">Developmental protein</keyword>
<keyword id="KW-0238">DNA-binding</keyword>
<keyword id="KW-0539">Nucleus</keyword>
<keyword id="KW-0562">Pair-rule protein</keyword>
<keyword id="KW-0597">Phosphoprotein</keyword>
<keyword id="KW-1185">Reference proteome</keyword>
<keyword id="KW-0804">Transcription</keyword>
<keyword id="KW-0805">Transcription regulation</keyword>